<accession>Q2J6V2</accession>
<keyword id="KW-0028">Amino-acid biosynthesis</keyword>
<keyword id="KW-0100">Branched-chain amino acid biosynthesis</keyword>
<keyword id="KW-0460">Magnesium</keyword>
<keyword id="KW-0479">Metal-binding</keyword>
<keyword id="KW-0521">NADP</keyword>
<keyword id="KW-0560">Oxidoreductase</keyword>
<keyword id="KW-1185">Reference proteome</keyword>
<sequence>MVEIYYDDDASLDVLADRKVAVIGYGSQGHAHALNLRDSGVDVRVGLPADSRSRARAEEEGLRVLTPAEASAEADIIMLLTPDTTHRTIYAESIAPHLTAGKALAFGHGFNIRYGLIEPPAGVDVFMVAPKGPGHLVRRVFEEGKGVPVLVAVEADASGNALAVALAYAKGIGGTRAGALRTTFTEETETDLFGEQAVLCGGASALVQAGFETLVEAGYTPEVAYFECLHELKLIVDLMYEGGISQMRYSISDTAEYGDVTRGPRVITPAVKAEMRKILDEIRDGAFAREWVAEDDNGRPNFTKLVAEGKQHPIEQVGAKLRPMMSWIA</sequence>
<feature type="chain" id="PRO_0000252760" description="Ketol-acid reductoisomerase (NADP(+))">
    <location>
        <begin position="1"/>
        <end position="329"/>
    </location>
</feature>
<feature type="domain" description="KARI N-terminal Rossmann" evidence="2">
    <location>
        <begin position="2"/>
        <end position="182"/>
    </location>
</feature>
<feature type="domain" description="KARI C-terminal knotted" evidence="3">
    <location>
        <begin position="183"/>
        <end position="328"/>
    </location>
</feature>
<feature type="active site" evidence="1">
    <location>
        <position position="108"/>
    </location>
</feature>
<feature type="binding site" evidence="1">
    <location>
        <begin position="25"/>
        <end position="28"/>
    </location>
    <ligand>
        <name>NADP(+)</name>
        <dbReference type="ChEBI" id="CHEBI:58349"/>
    </ligand>
</feature>
<feature type="binding site" evidence="1">
    <location>
        <position position="51"/>
    </location>
    <ligand>
        <name>NADP(+)</name>
        <dbReference type="ChEBI" id="CHEBI:58349"/>
    </ligand>
</feature>
<feature type="binding site" evidence="1">
    <location>
        <position position="53"/>
    </location>
    <ligand>
        <name>NADP(+)</name>
        <dbReference type="ChEBI" id="CHEBI:58349"/>
    </ligand>
</feature>
<feature type="binding site" evidence="1">
    <location>
        <position position="134"/>
    </location>
    <ligand>
        <name>NADP(+)</name>
        <dbReference type="ChEBI" id="CHEBI:58349"/>
    </ligand>
</feature>
<feature type="binding site" evidence="1">
    <location>
        <position position="191"/>
    </location>
    <ligand>
        <name>Mg(2+)</name>
        <dbReference type="ChEBI" id="CHEBI:18420"/>
        <label>1</label>
    </ligand>
</feature>
<feature type="binding site" evidence="1">
    <location>
        <position position="191"/>
    </location>
    <ligand>
        <name>Mg(2+)</name>
        <dbReference type="ChEBI" id="CHEBI:18420"/>
        <label>2</label>
    </ligand>
</feature>
<feature type="binding site" evidence="1">
    <location>
        <position position="195"/>
    </location>
    <ligand>
        <name>Mg(2+)</name>
        <dbReference type="ChEBI" id="CHEBI:18420"/>
        <label>1</label>
    </ligand>
</feature>
<feature type="binding site" evidence="1">
    <location>
        <position position="227"/>
    </location>
    <ligand>
        <name>Mg(2+)</name>
        <dbReference type="ChEBI" id="CHEBI:18420"/>
        <label>2</label>
    </ligand>
</feature>
<feature type="binding site" evidence="1">
    <location>
        <position position="231"/>
    </location>
    <ligand>
        <name>Mg(2+)</name>
        <dbReference type="ChEBI" id="CHEBI:18420"/>
        <label>2</label>
    </ligand>
</feature>
<feature type="binding site" evidence="1">
    <location>
        <position position="252"/>
    </location>
    <ligand>
        <name>substrate</name>
    </ligand>
</feature>
<reference key="1">
    <citation type="journal article" date="2007" name="Genome Res.">
        <title>Genome characteristics of facultatively symbiotic Frankia sp. strains reflect host range and host plant biogeography.</title>
        <authorList>
            <person name="Normand P."/>
            <person name="Lapierre P."/>
            <person name="Tisa L.S."/>
            <person name="Gogarten J.P."/>
            <person name="Alloisio N."/>
            <person name="Bagnarol E."/>
            <person name="Bassi C.A."/>
            <person name="Berry A.M."/>
            <person name="Bickhart D.M."/>
            <person name="Choisne N."/>
            <person name="Couloux A."/>
            <person name="Cournoyer B."/>
            <person name="Cruveiller S."/>
            <person name="Daubin V."/>
            <person name="Demange N."/>
            <person name="Francino M.P."/>
            <person name="Goltsman E."/>
            <person name="Huang Y."/>
            <person name="Kopp O.R."/>
            <person name="Labarre L."/>
            <person name="Lapidus A."/>
            <person name="Lavire C."/>
            <person name="Marechal J."/>
            <person name="Martinez M."/>
            <person name="Mastronunzio J.E."/>
            <person name="Mullin B.C."/>
            <person name="Niemann J."/>
            <person name="Pujic P."/>
            <person name="Rawnsley T."/>
            <person name="Rouy Z."/>
            <person name="Schenowitz C."/>
            <person name="Sellstedt A."/>
            <person name="Tavares F."/>
            <person name="Tomkins J.P."/>
            <person name="Vallenet D."/>
            <person name="Valverde C."/>
            <person name="Wall L.G."/>
            <person name="Wang Y."/>
            <person name="Medigue C."/>
            <person name="Benson D.R."/>
        </authorList>
    </citation>
    <scope>NUCLEOTIDE SEQUENCE [LARGE SCALE GENOMIC DNA]</scope>
    <source>
        <strain>DSM 45818 / CECT 9043 / HFP020203 / CcI3</strain>
    </source>
</reference>
<name>ILVC_FRACC</name>
<protein>
    <recommendedName>
        <fullName evidence="1">Ketol-acid reductoisomerase (NADP(+))</fullName>
        <shortName evidence="1">KARI</shortName>
        <ecNumber evidence="1">1.1.1.86</ecNumber>
    </recommendedName>
    <alternativeName>
        <fullName evidence="1">Acetohydroxy-acid isomeroreductase</fullName>
        <shortName evidence="1">AHIR</shortName>
    </alternativeName>
    <alternativeName>
        <fullName evidence="1">Alpha-keto-beta-hydroxylacyl reductoisomerase</fullName>
    </alternativeName>
    <alternativeName>
        <fullName evidence="1">Ketol-acid reductoisomerase type 1</fullName>
    </alternativeName>
    <alternativeName>
        <fullName evidence="1">Ketol-acid reductoisomerase type I</fullName>
    </alternativeName>
</protein>
<dbReference type="EC" id="1.1.1.86" evidence="1"/>
<dbReference type="EMBL" id="CP000249">
    <property type="protein sequence ID" value="ABD12990.1"/>
    <property type="molecule type" value="Genomic_DNA"/>
</dbReference>
<dbReference type="RefSeq" id="WP_011438014.1">
    <property type="nucleotide sequence ID" value="NZ_MSEA01000192.1"/>
</dbReference>
<dbReference type="SMR" id="Q2J6V2"/>
<dbReference type="STRING" id="106370.Francci3_3638"/>
<dbReference type="KEGG" id="fra:Francci3_3638"/>
<dbReference type="eggNOG" id="COG0059">
    <property type="taxonomic scope" value="Bacteria"/>
</dbReference>
<dbReference type="HOGENOM" id="CLU_033821_0_1_11"/>
<dbReference type="OrthoDB" id="9804088at2"/>
<dbReference type="PhylomeDB" id="Q2J6V2"/>
<dbReference type="UniPathway" id="UPA00047">
    <property type="reaction ID" value="UER00056"/>
</dbReference>
<dbReference type="UniPathway" id="UPA00049">
    <property type="reaction ID" value="UER00060"/>
</dbReference>
<dbReference type="Proteomes" id="UP000001937">
    <property type="component" value="Chromosome"/>
</dbReference>
<dbReference type="GO" id="GO:0005829">
    <property type="term" value="C:cytosol"/>
    <property type="evidence" value="ECO:0007669"/>
    <property type="project" value="TreeGrafter"/>
</dbReference>
<dbReference type="GO" id="GO:0004455">
    <property type="term" value="F:ketol-acid reductoisomerase activity"/>
    <property type="evidence" value="ECO:0007669"/>
    <property type="project" value="UniProtKB-UniRule"/>
</dbReference>
<dbReference type="GO" id="GO:0000287">
    <property type="term" value="F:magnesium ion binding"/>
    <property type="evidence" value="ECO:0007669"/>
    <property type="project" value="UniProtKB-UniRule"/>
</dbReference>
<dbReference type="GO" id="GO:0050661">
    <property type="term" value="F:NADP binding"/>
    <property type="evidence" value="ECO:0007669"/>
    <property type="project" value="InterPro"/>
</dbReference>
<dbReference type="GO" id="GO:0009097">
    <property type="term" value="P:isoleucine biosynthetic process"/>
    <property type="evidence" value="ECO:0007669"/>
    <property type="project" value="UniProtKB-UniRule"/>
</dbReference>
<dbReference type="GO" id="GO:0009099">
    <property type="term" value="P:L-valine biosynthetic process"/>
    <property type="evidence" value="ECO:0007669"/>
    <property type="project" value="UniProtKB-UniRule"/>
</dbReference>
<dbReference type="FunFam" id="3.40.50.720:FF:000023">
    <property type="entry name" value="Ketol-acid reductoisomerase (NADP(+))"/>
    <property type="match status" value="1"/>
</dbReference>
<dbReference type="Gene3D" id="6.10.240.10">
    <property type="match status" value="1"/>
</dbReference>
<dbReference type="Gene3D" id="3.40.50.720">
    <property type="entry name" value="NAD(P)-binding Rossmann-like Domain"/>
    <property type="match status" value="1"/>
</dbReference>
<dbReference type="HAMAP" id="MF_00435">
    <property type="entry name" value="IlvC"/>
    <property type="match status" value="1"/>
</dbReference>
<dbReference type="InterPro" id="IPR008927">
    <property type="entry name" value="6-PGluconate_DH-like_C_sf"/>
</dbReference>
<dbReference type="InterPro" id="IPR013023">
    <property type="entry name" value="KARI"/>
</dbReference>
<dbReference type="InterPro" id="IPR000506">
    <property type="entry name" value="KARI_C"/>
</dbReference>
<dbReference type="InterPro" id="IPR013116">
    <property type="entry name" value="KARI_N"/>
</dbReference>
<dbReference type="InterPro" id="IPR014359">
    <property type="entry name" value="KARI_prok"/>
</dbReference>
<dbReference type="InterPro" id="IPR036291">
    <property type="entry name" value="NAD(P)-bd_dom_sf"/>
</dbReference>
<dbReference type="NCBIfam" id="TIGR00465">
    <property type="entry name" value="ilvC"/>
    <property type="match status" value="1"/>
</dbReference>
<dbReference type="NCBIfam" id="NF004017">
    <property type="entry name" value="PRK05479.1"/>
    <property type="match status" value="1"/>
</dbReference>
<dbReference type="NCBIfam" id="NF009940">
    <property type="entry name" value="PRK13403.1"/>
    <property type="match status" value="1"/>
</dbReference>
<dbReference type="PANTHER" id="PTHR21371">
    <property type="entry name" value="KETOL-ACID REDUCTOISOMERASE, MITOCHONDRIAL"/>
    <property type="match status" value="1"/>
</dbReference>
<dbReference type="PANTHER" id="PTHR21371:SF1">
    <property type="entry name" value="KETOL-ACID REDUCTOISOMERASE, MITOCHONDRIAL"/>
    <property type="match status" value="1"/>
</dbReference>
<dbReference type="Pfam" id="PF01450">
    <property type="entry name" value="KARI_C"/>
    <property type="match status" value="1"/>
</dbReference>
<dbReference type="Pfam" id="PF07991">
    <property type="entry name" value="KARI_N"/>
    <property type="match status" value="1"/>
</dbReference>
<dbReference type="PIRSF" id="PIRSF000116">
    <property type="entry name" value="IlvC_gammaproteo"/>
    <property type="match status" value="1"/>
</dbReference>
<dbReference type="SUPFAM" id="SSF48179">
    <property type="entry name" value="6-phosphogluconate dehydrogenase C-terminal domain-like"/>
    <property type="match status" value="1"/>
</dbReference>
<dbReference type="SUPFAM" id="SSF51735">
    <property type="entry name" value="NAD(P)-binding Rossmann-fold domains"/>
    <property type="match status" value="1"/>
</dbReference>
<dbReference type="PROSITE" id="PS51851">
    <property type="entry name" value="KARI_C"/>
    <property type="match status" value="1"/>
</dbReference>
<dbReference type="PROSITE" id="PS51850">
    <property type="entry name" value="KARI_N"/>
    <property type="match status" value="1"/>
</dbReference>
<comment type="function">
    <text evidence="1">Involved in the biosynthesis of branched-chain amino acids (BCAA). Catalyzes an alkyl-migration followed by a ketol-acid reduction of (S)-2-acetolactate (S2AL) to yield (R)-2,3-dihydroxy-isovalerate. In the isomerase reaction, S2AL is rearranged via a Mg-dependent methyl migration to produce 3-hydroxy-3-methyl-2-ketobutyrate (HMKB). In the reductase reaction, this 2-ketoacid undergoes a metal-dependent reduction by NADPH to yield (R)-2,3-dihydroxy-isovalerate.</text>
</comment>
<comment type="catalytic activity">
    <reaction evidence="1">
        <text>(2R)-2,3-dihydroxy-3-methylbutanoate + NADP(+) = (2S)-2-acetolactate + NADPH + H(+)</text>
        <dbReference type="Rhea" id="RHEA:22068"/>
        <dbReference type="ChEBI" id="CHEBI:15378"/>
        <dbReference type="ChEBI" id="CHEBI:49072"/>
        <dbReference type="ChEBI" id="CHEBI:57783"/>
        <dbReference type="ChEBI" id="CHEBI:58349"/>
        <dbReference type="ChEBI" id="CHEBI:58476"/>
        <dbReference type="EC" id="1.1.1.86"/>
    </reaction>
</comment>
<comment type="catalytic activity">
    <reaction evidence="1">
        <text>(2R,3R)-2,3-dihydroxy-3-methylpentanoate + NADP(+) = (S)-2-ethyl-2-hydroxy-3-oxobutanoate + NADPH + H(+)</text>
        <dbReference type="Rhea" id="RHEA:13493"/>
        <dbReference type="ChEBI" id="CHEBI:15378"/>
        <dbReference type="ChEBI" id="CHEBI:49256"/>
        <dbReference type="ChEBI" id="CHEBI:49258"/>
        <dbReference type="ChEBI" id="CHEBI:57783"/>
        <dbReference type="ChEBI" id="CHEBI:58349"/>
        <dbReference type="EC" id="1.1.1.86"/>
    </reaction>
</comment>
<comment type="cofactor">
    <cofactor evidence="1">
        <name>Mg(2+)</name>
        <dbReference type="ChEBI" id="CHEBI:18420"/>
    </cofactor>
    <text evidence="1">Binds 2 magnesium ions per subunit.</text>
</comment>
<comment type="pathway">
    <text evidence="1">Amino-acid biosynthesis; L-isoleucine biosynthesis; L-isoleucine from 2-oxobutanoate: step 2/4.</text>
</comment>
<comment type="pathway">
    <text evidence="1">Amino-acid biosynthesis; L-valine biosynthesis; L-valine from pyruvate: step 2/4.</text>
</comment>
<comment type="similarity">
    <text evidence="1">Belongs to the ketol-acid reductoisomerase family.</text>
</comment>
<evidence type="ECO:0000255" key="1">
    <source>
        <dbReference type="HAMAP-Rule" id="MF_00435"/>
    </source>
</evidence>
<evidence type="ECO:0000255" key="2">
    <source>
        <dbReference type="PROSITE-ProRule" id="PRU01197"/>
    </source>
</evidence>
<evidence type="ECO:0000255" key="3">
    <source>
        <dbReference type="PROSITE-ProRule" id="PRU01198"/>
    </source>
</evidence>
<organism>
    <name type="scientific">Frankia casuarinae (strain DSM 45818 / CECT 9043 / HFP020203 / CcI3)</name>
    <dbReference type="NCBI Taxonomy" id="106370"/>
    <lineage>
        <taxon>Bacteria</taxon>
        <taxon>Bacillati</taxon>
        <taxon>Actinomycetota</taxon>
        <taxon>Actinomycetes</taxon>
        <taxon>Frankiales</taxon>
        <taxon>Frankiaceae</taxon>
        <taxon>Frankia</taxon>
    </lineage>
</organism>
<gene>
    <name evidence="1" type="primary">ilvC</name>
    <name type="ordered locus">Francci3_3638</name>
</gene>
<proteinExistence type="inferred from homology"/>